<protein>
    <recommendedName>
        <fullName evidence="3">Triosephosphate isomerase 2</fullName>
        <shortName evidence="1">TIM 2</shortName>
        <shortName evidence="3">TPI 2</shortName>
        <ecNumber evidence="2">5.3.1.1</ecNumber>
    </recommendedName>
    <alternativeName>
        <fullName evidence="1">Triose-phosphate isomerase 2</fullName>
    </alternativeName>
</protein>
<feature type="chain" id="PRO_0000090239" description="Triosephosphate isomerase 2">
    <location>
        <begin position="1"/>
        <end position="254"/>
    </location>
</feature>
<feature type="active site" description="Electrophile" evidence="1">
    <location>
        <position position="96"/>
    </location>
</feature>
<feature type="active site" description="Proton acceptor" evidence="1">
    <location>
        <position position="168"/>
    </location>
</feature>
<feature type="binding site" evidence="1">
    <location>
        <begin position="9"/>
        <end position="11"/>
    </location>
    <ligand>
        <name>substrate</name>
    </ligand>
</feature>
<feature type="binding site" evidence="1">
    <location>
        <position position="174"/>
    </location>
    <ligand>
        <name>substrate</name>
    </ligand>
</feature>
<feature type="binding site" evidence="1">
    <location>
        <position position="212"/>
    </location>
    <ligand>
        <name>substrate</name>
    </ligand>
</feature>
<accession>Q92EU4</accession>
<reference key="1">
    <citation type="journal article" date="2001" name="Science">
        <title>Comparative genomics of Listeria species.</title>
        <authorList>
            <person name="Glaser P."/>
            <person name="Frangeul L."/>
            <person name="Buchrieser C."/>
            <person name="Rusniok C."/>
            <person name="Amend A."/>
            <person name="Baquero F."/>
            <person name="Berche P."/>
            <person name="Bloecker H."/>
            <person name="Brandt P."/>
            <person name="Chakraborty T."/>
            <person name="Charbit A."/>
            <person name="Chetouani F."/>
            <person name="Couve E."/>
            <person name="de Daruvar A."/>
            <person name="Dehoux P."/>
            <person name="Domann E."/>
            <person name="Dominguez-Bernal G."/>
            <person name="Duchaud E."/>
            <person name="Durant L."/>
            <person name="Dussurget O."/>
            <person name="Entian K.-D."/>
            <person name="Fsihi H."/>
            <person name="Garcia-del Portillo F."/>
            <person name="Garrido P."/>
            <person name="Gautier L."/>
            <person name="Goebel W."/>
            <person name="Gomez-Lopez N."/>
            <person name="Hain T."/>
            <person name="Hauf J."/>
            <person name="Jackson D."/>
            <person name="Jones L.-M."/>
            <person name="Kaerst U."/>
            <person name="Kreft J."/>
            <person name="Kuhn M."/>
            <person name="Kunst F."/>
            <person name="Kurapkat G."/>
            <person name="Madueno E."/>
            <person name="Maitournam A."/>
            <person name="Mata Vicente J."/>
            <person name="Ng E."/>
            <person name="Nedjari H."/>
            <person name="Nordsiek G."/>
            <person name="Novella S."/>
            <person name="de Pablos B."/>
            <person name="Perez-Diaz J.-C."/>
            <person name="Purcell R."/>
            <person name="Remmel B."/>
            <person name="Rose M."/>
            <person name="Schlueter T."/>
            <person name="Simoes N."/>
            <person name="Tierrez A."/>
            <person name="Vazquez-Boland J.-A."/>
            <person name="Voss H."/>
            <person name="Wehland J."/>
            <person name="Cossart P."/>
        </authorList>
    </citation>
    <scope>NUCLEOTIDE SEQUENCE [LARGE SCALE GENOMIC DNA]</scope>
    <source>
        <strain>ATCC BAA-680 / CLIP 11262</strain>
    </source>
</reference>
<reference key="2">
    <citation type="journal article" date="2012" name="J. Bacteriol.">
        <title>Novel listerial glycerol dehydrogenase- and phosphoenolpyruvate-dependent dihydroxyacetone kinase system connected to the pentose phosphate pathway.</title>
        <authorList>
            <person name="Monniot C."/>
            <person name="Zebre A.C."/>
            <person name="Ake F.M."/>
            <person name="Deutscher J."/>
            <person name="Milohanic E."/>
        </authorList>
    </citation>
    <scope>FUNCTION</scope>
    <scope>CATALYTIC ACTIVITY</scope>
    <scope>INDUCTION</scope>
    <scope>SUBCELLULAR LOCATION</scope>
    <scope>PATHWAY</scope>
    <source>
        <strain>ATCC BAA-680 / CLIP 11262</strain>
    </source>
</reference>
<evidence type="ECO:0000250" key="1">
    <source>
        <dbReference type="UniProtKB" id="P9WG43"/>
    </source>
</evidence>
<evidence type="ECO:0000269" key="2">
    <source>
    </source>
</evidence>
<evidence type="ECO:0000303" key="3">
    <source>
    </source>
</evidence>
<evidence type="ECO:0000305" key="4"/>
<evidence type="ECO:0000305" key="5">
    <source>
    </source>
</evidence>
<name>TPIS2_LISIN</name>
<dbReference type="EC" id="5.3.1.1" evidence="2"/>
<dbReference type="EMBL" id="AL596164">
    <property type="protein sequence ID" value="CAC95597.1"/>
    <property type="molecule type" value="Genomic_DNA"/>
</dbReference>
<dbReference type="PIR" id="AE1478">
    <property type="entry name" value="AE1478"/>
</dbReference>
<dbReference type="RefSeq" id="WP_010990359.1">
    <property type="nucleotide sequence ID" value="NC_003212.1"/>
</dbReference>
<dbReference type="SMR" id="Q92EU4"/>
<dbReference type="STRING" id="272626.gene:17564691"/>
<dbReference type="KEGG" id="lin:lin0364"/>
<dbReference type="eggNOG" id="COG0149">
    <property type="taxonomic scope" value="Bacteria"/>
</dbReference>
<dbReference type="HOGENOM" id="CLU_024251_2_3_9"/>
<dbReference type="OrthoDB" id="9809429at2"/>
<dbReference type="UniPathway" id="UPA00616"/>
<dbReference type="Proteomes" id="UP000002513">
    <property type="component" value="Chromosome"/>
</dbReference>
<dbReference type="GO" id="GO:0005737">
    <property type="term" value="C:cytoplasm"/>
    <property type="evidence" value="ECO:0000304"/>
    <property type="project" value="UniProtKB"/>
</dbReference>
<dbReference type="GO" id="GO:0005829">
    <property type="term" value="C:cytosol"/>
    <property type="evidence" value="ECO:0007669"/>
    <property type="project" value="TreeGrafter"/>
</dbReference>
<dbReference type="GO" id="GO:0004807">
    <property type="term" value="F:triose-phosphate isomerase activity"/>
    <property type="evidence" value="ECO:0000314"/>
    <property type="project" value="UniProtKB"/>
</dbReference>
<dbReference type="GO" id="GO:0006094">
    <property type="term" value="P:gluconeogenesis"/>
    <property type="evidence" value="ECO:0000304"/>
    <property type="project" value="UniProtKB"/>
</dbReference>
<dbReference type="GO" id="GO:0046166">
    <property type="term" value="P:glyceraldehyde-3-phosphate biosynthetic process"/>
    <property type="evidence" value="ECO:0007669"/>
    <property type="project" value="TreeGrafter"/>
</dbReference>
<dbReference type="GO" id="GO:0019563">
    <property type="term" value="P:glycerol catabolic process"/>
    <property type="evidence" value="ECO:0007669"/>
    <property type="project" value="UniProtKB-UniPathway"/>
</dbReference>
<dbReference type="GO" id="GO:0006096">
    <property type="term" value="P:glycolytic process"/>
    <property type="evidence" value="ECO:0000304"/>
    <property type="project" value="UniProtKB"/>
</dbReference>
<dbReference type="CDD" id="cd00311">
    <property type="entry name" value="TIM"/>
    <property type="match status" value="1"/>
</dbReference>
<dbReference type="FunFam" id="3.20.20.70:FF:000328">
    <property type="entry name" value="Triosephosphate isomerase 2"/>
    <property type="match status" value="1"/>
</dbReference>
<dbReference type="Gene3D" id="3.20.20.70">
    <property type="entry name" value="Aldolase class I"/>
    <property type="match status" value="1"/>
</dbReference>
<dbReference type="InterPro" id="IPR013785">
    <property type="entry name" value="Aldolase_TIM"/>
</dbReference>
<dbReference type="InterPro" id="IPR035990">
    <property type="entry name" value="TIM_sf"/>
</dbReference>
<dbReference type="InterPro" id="IPR000652">
    <property type="entry name" value="Triosephosphate_isomerase"/>
</dbReference>
<dbReference type="InterPro" id="IPR020861">
    <property type="entry name" value="Triosephosphate_isomerase_AS"/>
</dbReference>
<dbReference type="PANTHER" id="PTHR21139">
    <property type="entry name" value="TRIOSEPHOSPHATE ISOMERASE"/>
    <property type="match status" value="1"/>
</dbReference>
<dbReference type="PANTHER" id="PTHR21139:SF42">
    <property type="entry name" value="TRIOSEPHOSPHATE ISOMERASE"/>
    <property type="match status" value="1"/>
</dbReference>
<dbReference type="Pfam" id="PF00121">
    <property type="entry name" value="TIM"/>
    <property type="match status" value="1"/>
</dbReference>
<dbReference type="SUPFAM" id="SSF51351">
    <property type="entry name" value="Triosephosphate isomerase (TIM)"/>
    <property type="match status" value="1"/>
</dbReference>
<dbReference type="PROSITE" id="PS00171">
    <property type="entry name" value="TIM_1"/>
    <property type="match status" value="1"/>
</dbReference>
<dbReference type="PROSITE" id="PS51440">
    <property type="entry name" value="TIM_2"/>
    <property type="match status" value="1"/>
</dbReference>
<proteinExistence type="evidence at protein level"/>
<sequence>MRKPLVGINMKNYINTRAQTSEWLEATIPLLENFSDVDTFIFPSMGTLETTANLLAGTSFGFGPQNMAPEKSGPLTGEFSVESIIDLNANYVEIGHAERKNLFHEKTSEIAKKIKLALDEKITPVVCVGEEVHANDTNELKNALKKQIEALFQTINLAQWENVVLAYEPEWAIGKASSAETNYIESAHQALREIIRELGGDETLVRIIYGGSVSKENAAEIVRQKNVDGLFVGRFGHKPQNFADIVSIVSKTKG</sequence>
<comment type="function">
    <text evidence="2">Involved in the glycerol metabolism. Catalyzes stereospecifically the conversion of dihydroxyacetone phosphate (DHAP) to D-glyceraldehyde-3-phosphate (G3P).</text>
</comment>
<comment type="catalytic activity">
    <reaction evidence="2">
        <text>D-glyceraldehyde 3-phosphate = dihydroxyacetone phosphate</text>
        <dbReference type="Rhea" id="RHEA:18585"/>
        <dbReference type="ChEBI" id="CHEBI:57642"/>
        <dbReference type="ChEBI" id="CHEBI:59776"/>
        <dbReference type="EC" id="5.3.1.1"/>
    </reaction>
</comment>
<comment type="pathway">
    <text evidence="5">Polyol metabolism; glycerol degradation.</text>
</comment>
<comment type="subunit">
    <text evidence="1">Homodimer.</text>
</comment>
<comment type="subcellular location">
    <subcellularLocation>
        <location evidence="5">Cytoplasm</location>
    </subcellularLocation>
</comment>
<comment type="induction">
    <text evidence="2">Repressed by GolR.</text>
</comment>
<comment type="similarity">
    <text evidence="4">Belongs to the triosephosphate isomerase family.</text>
</comment>
<gene>
    <name evidence="3" type="primary">tpi-2</name>
    <name evidence="4" type="synonym">tpiA2</name>
    <name type="ordered locus">lin0364</name>
</gene>
<keyword id="KW-0963">Cytoplasm</keyword>
<keyword id="KW-0319">Glycerol metabolism</keyword>
<keyword id="KW-0413">Isomerase</keyword>
<organism>
    <name type="scientific">Listeria innocua serovar 6a (strain ATCC BAA-680 / CLIP 11262)</name>
    <dbReference type="NCBI Taxonomy" id="272626"/>
    <lineage>
        <taxon>Bacteria</taxon>
        <taxon>Bacillati</taxon>
        <taxon>Bacillota</taxon>
        <taxon>Bacilli</taxon>
        <taxon>Bacillales</taxon>
        <taxon>Listeriaceae</taxon>
        <taxon>Listeria</taxon>
    </lineage>
</organism>